<proteinExistence type="inferred from homology"/>
<protein>
    <recommendedName>
        <fullName evidence="1">S-adenosylmethionine:tRNA ribosyltransferase-isomerase</fullName>
        <ecNumber evidence="1">2.4.99.17</ecNumber>
    </recommendedName>
    <alternativeName>
        <fullName evidence="1">Queuosine biosynthesis protein QueA</fullName>
    </alternativeName>
</protein>
<feature type="chain" id="PRO_0000165427" description="S-adenosylmethionine:tRNA ribosyltransferase-isomerase">
    <location>
        <begin position="1"/>
        <end position="354"/>
    </location>
</feature>
<organism>
    <name type="scientific">Pseudomonas syringae pv. tomato (strain ATCC BAA-871 / DC3000)</name>
    <dbReference type="NCBI Taxonomy" id="223283"/>
    <lineage>
        <taxon>Bacteria</taxon>
        <taxon>Pseudomonadati</taxon>
        <taxon>Pseudomonadota</taxon>
        <taxon>Gammaproteobacteria</taxon>
        <taxon>Pseudomonadales</taxon>
        <taxon>Pseudomonadaceae</taxon>
        <taxon>Pseudomonas</taxon>
    </lineage>
</organism>
<reference key="1">
    <citation type="journal article" date="2000" name="Proc. Natl. Acad. Sci. U.S.A.">
        <title>The Pseudomonas syringae Hrp pathogenicity island has a tripartite mosaic structure composed of a cluster of type III secretion genes bounded by exchangeable effector and conserved effector loci that contribute to parasitic fitness and pathogenicity in plants.</title>
        <authorList>
            <person name="Alfano J.R."/>
            <person name="Charkowski A.O."/>
            <person name="Deng W.-L."/>
            <person name="Badel J.L."/>
            <person name="Petnicki-Ocwieja T."/>
            <person name="van Dijk K."/>
            <person name="Collmer A."/>
        </authorList>
    </citation>
    <scope>NUCLEOTIDE SEQUENCE [GENOMIC DNA]</scope>
    <source>
        <strain>ATCC BAA-871 / DC3000</strain>
    </source>
</reference>
<reference key="2">
    <citation type="submission" date="2001-03" db="EMBL/GenBank/DDBJ databases">
        <title>Pseudomonas syringae pv. tomato DC3000 hrpL through hrcU.</title>
        <authorList>
            <person name="Ramos A.R."/>
            <person name="Rehm A.H."/>
            <person name="Collmer A.R."/>
        </authorList>
    </citation>
    <scope>NUCLEOTIDE SEQUENCE [GENOMIC DNA]</scope>
    <source>
        <strain>ATCC BAA-871 / DC3000</strain>
    </source>
</reference>
<reference key="3">
    <citation type="journal article" date="2003" name="Proc. Natl. Acad. Sci. U.S.A.">
        <title>The complete genome sequence of the Arabidopsis and tomato pathogen Pseudomonas syringae pv. tomato DC3000.</title>
        <authorList>
            <person name="Buell C.R."/>
            <person name="Joardar V."/>
            <person name="Lindeberg M."/>
            <person name="Selengut J."/>
            <person name="Paulsen I.T."/>
            <person name="Gwinn M.L."/>
            <person name="Dodson R.J."/>
            <person name="DeBoy R.T."/>
            <person name="Durkin A.S."/>
            <person name="Kolonay J.F."/>
            <person name="Madupu R."/>
            <person name="Daugherty S.C."/>
            <person name="Brinkac L.M."/>
            <person name="Beanan M.J."/>
            <person name="Haft D.H."/>
            <person name="Nelson W.C."/>
            <person name="Davidsen T.M."/>
            <person name="Zafar N."/>
            <person name="Zhou L."/>
            <person name="Liu J."/>
            <person name="Yuan Q."/>
            <person name="Khouri H.M."/>
            <person name="Fedorova N.B."/>
            <person name="Tran B."/>
            <person name="Russell D."/>
            <person name="Berry K.J."/>
            <person name="Utterback T.R."/>
            <person name="Van Aken S.E."/>
            <person name="Feldblyum T.V."/>
            <person name="D'Ascenzo M."/>
            <person name="Deng W.-L."/>
            <person name="Ramos A.R."/>
            <person name="Alfano J.R."/>
            <person name="Cartinhour S."/>
            <person name="Chatterjee A.K."/>
            <person name="Delaney T.P."/>
            <person name="Lazarowitz S.G."/>
            <person name="Martin G.B."/>
            <person name="Schneider D.J."/>
            <person name="Tang X."/>
            <person name="Bender C.L."/>
            <person name="White O."/>
            <person name="Fraser C.M."/>
            <person name="Collmer A."/>
        </authorList>
    </citation>
    <scope>NUCLEOTIDE SEQUENCE [LARGE SCALE GENOMIC DNA]</scope>
    <source>
        <strain>ATCC BAA-871 / DC3000</strain>
    </source>
</reference>
<gene>
    <name evidence="1" type="primary">queA</name>
    <name type="ordered locus">PSPTO_1412</name>
</gene>
<evidence type="ECO:0000255" key="1">
    <source>
        <dbReference type="HAMAP-Rule" id="MF_00113"/>
    </source>
</evidence>
<keyword id="KW-0963">Cytoplasm</keyword>
<keyword id="KW-0671">Queuosine biosynthesis</keyword>
<keyword id="KW-1185">Reference proteome</keyword>
<keyword id="KW-0949">S-adenosyl-L-methionine</keyword>
<keyword id="KW-0808">Transferase</keyword>
<accession>Q9L6W9</accession>
<sequence length="354" mass="38719">MRVADFTFELPDSLIARHPLAERRSSRLLTLDGPTGALAHRQFTDLLEHLRSGDLMVFNNTRVIPARLFGQKASGGKLEILVERVLDSHRVLAHVRASKSPKPGSSILIDGGGEAEMVARHDALFELRFAEEVLPLLDRVGHMPLPPYIDRPDEGADRERYQTVYAQRAGAVAAPTAGLHFDQPLMEAIAAKGVETAFVTLHVGAGTFQPVRVEQIEDHHMHSEWLEVSQDVVDAVAACRARGGRVIAVGTTSVRSLESAARDGQLKPFSGDTDIFIYPGRPFHVVDALVTNFHLPESTLLMLVSAFAGYPETMAAYAAAIEHGYRFFSYGDAMFITRNPAPTAPQESAPEDHA</sequence>
<comment type="function">
    <text evidence="1">Transfers and isomerizes the ribose moiety from AdoMet to the 7-aminomethyl group of 7-deazaguanine (preQ1-tRNA) to give epoxyqueuosine (oQ-tRNA).</text>
</comment>
<comment type="catalytic activity">
    <reaction evidence="1">
        <text>7-aminomethyl-7-carbaguanosine(34) in tRNA + S-adenosyl-L-methionine = epoxyqueuosine(34) in tRNA + adenine + L-methionine + 2 H(+)</text>
        <dbReference type="Rhea" id="RHEA:32155"/>
        <dbReference type="Rhea" id="RHEA-COMP:10342"/>
        <dbReference type="Rhea" id="RHEA-COMP:18582"/>
        <dbReference type="ChEBI" id="CHEBI:15378"/>
        <dbReference type="ChEBI" id="CHEBI:16708"/>
        <dbReference type="ChEBI" id="CHEBI:57844"/>
        <dbReference type="ChEBI" id="CHEBI:59789"/>
        <dbReference type="ChEBI" id="CHEBI:82833"/>
        <dbReference type="ChEBI" id="CHEBI:194443"/>
        <dbReference type="EC" id="2.4.99.17"/>
    </reaction>
</comment>
<comment type="pathway">
    <text evidence="1">tRNA modification; tRNA-queuosine biosynthesis.</text>
</comment>
<comment type="subunit">
    <text evidence="1">Monomer.</text>
</comment>
<comment type="subcellular location">
    <subcellularLocation>
        <location evidence="1">Cytoplasm</location>
    </subcellularLocation>
</comment>
<comment type="similarity">
    <text evidence="1">Belongs to the QueA family.</text>
</comment>
<name>QUEA_PSESM</name>
<dbReference type="EC" id="2.4.99.17" evidence="1"/>
<dbReference type="EMBL" id="AF232004">
    <property type="protein sequence ID" value="AAF71483.1"/>
    <property type="molecule type" value="Genomic_DNA"/>
</dbReference>
<dbReference type="EMBL" id="AE016853">
    <property type="protein sequence ID" value="AAO54933.1"/>
    <property type="molecule type" value="Genomic_DNA"/>
</dbReference>
<dbReference type="RefSeq" id="NP_791238.1">
    <property type="nucleotide sequence ID" value="NC_004578.1"/>
</dbReference>
<dbReference type="RefSeq" id="WP_005771042.1">
    <property type="nucleotide sequence ID" value="NC_004578.1"/>
</dbReference>
<dbReference type="SMR" id="Q9L6W9"/>
<dbReference type="STRING" id="223283.PSPTO_1412"/>
<dbReference type="GeneID" id="1183049"/>
<dbReference type="KEGG" id="pst:PSPTO_1412"/>
<dbReference type="PATRIC" id="fig|223283.9.peg.1432"/>
<dbReference type="eggNOG" id="COG0809">
    <property type="taxonomic scope" value="Bacteria"/>
</dbReference>
<dbReference type="HOGENOM" id="CLU_039110_1_0_6"/>
<dbReference type="OrthoDB" id="9805933at2"/>
<dbReference type="PhylomeDB" id="Q9L6W9"/>
<dbReference type="UniPathway" id="UPA00392"/>
<dbReference type="Proteomes" id="UP000002515">
    <property type="component" value="Chromosome"/>
</dbReference>
<dbReference type="GO" id="GO:0005737">
    <property type="term" value="C:cytoplasm"/>
    <property type="evidence" value="ECO:0007669"/>
    <property type="project" value="UniProtKB-SubCell"/>
</dbReference>
<dbReference type="GO" id="GO:0051075">
    <property type="term" value="F:S-adenosylmethionine:tRNA ribosyltransferase-isomerase activity"/>
    <property type="evidence" value="ECO:0007669"/>
    <property type="project" value="UniProtKB-EC"/>
</dbReference>
<dbReference type="GO" id="GO:0008616">
    <property type="term" value="P:queuosine biosynthetic process"/>
    <property type="evidence" value="ECO:0007669"/>
    <property type="project" value="UniProtKB-UniRule"/>
</dbReference>
<dbReference type="GO" id="GO:0002099">
    <property type="term" value="P:tRNA wobble guanine modification"/>
    <property type="evidence" value="ECO:0007669"/>
    <property type="project" value="TreeGrafter"/>
</dbReference>
<dbReference type="FunFam" id="2.40.10.240:FF:000001">
    <property type="entry name" value="S-adenosylmethionine:tRNA ribosyltransferase-isomerase"/>
    <property type="match status" value="1"/>
</dbReference>
<dbReference type="FunFam" id="3.40.1780.10:FF:000001">
    <property type="entry name" value="S-adenosylmethionine:tRNA ribosyltransferase-isomerase"/>
    <property type="match status" value="1"/>
</dbReference>
<dbReference type="Gene3D" id="2.40.10.240">
    <property type="entry name" value="QueA-like"/>
    <property type="match status" value="1"/>
</dbReference>
<dbReference type="Gene3D" id="3.40.1780.10">
    <property type="entry name" value="QueA-like"/>
    <property type="match status" value="1"/>
</dbReference>
<dbReference type="HAMAP" id="MF_00113">
    <property type="entry name" value="QueA"/>
    <property type="match status" value="1"/>
</dbReference>
<dbReference type="InterPro" id="IPR003699">
    <property type="entry name" value="QueA"/>
</dbReference>
<dbReference type="InterPro" id="IPR042118">
    <property type="entry name" value="QueA_dom1"/>
</dbReference>
<dbReference type="InterPro" id="IPR042119">
    <property type="entry name" value="QueA_dom2"/>
</dbReference>
<dbReference type="InterPro" id="IPR036100">
    <property type="entry name" value="QueA_sf"/>
</dbReference>
<dbReference type="NCBIfam" id="NF001140">
    <property type="entry name" value="PRK00147.1"/>
    <property type="match status" value="1"/>
</dbReference>
<dbReference type="NCBIfam" id="TIGR00113">
    <property type="entry name" value="queA"/>
    <property type="match status" value="1"/>
</dbReference>
<dbReference type="PANTHER" id="PTHR30307">
    <property type="entry name" value="S-ADENOSYLMETHIONINE:TRNA RIBOSYLTRANSFERASE-ISOMERASE"/>
    <property type="match status" value="1"/>
</dbReference>
<dbReference type="PANTHER" id="PTHR30307:SF0">
    <property type="entry name" value="S-ADENOSYLMETHIONINE:TRNA RIBOSYLTRANSFERASE-ISOMERASE"/>
    <property type="match status" value="1"/>
</dbReference>
<dbReference type="Pfam" id="PF02547">
    <property type="entry name" value="Queuosine_synth"/>
    <property type="match status" value="1"/>
</dbReference>
<dbReference type="SUPFAM" id="SSF111337">
    <property type="entry name" value="QueA-like"/>
    <property type="match status" value="1"/>
</dbReference>